<name>HEMH_RICB8</name>
<evidence type="ECO:0000255" key="1">
    <source>
        <dbReference type="HAMAP-Rule" id="MF_00323"/>
    </source>
</evidence>
<organism>
    <name type="scientific">Rickettsia bellii (strain OSU 85-389)</name>
    <dbReference type="NCBI Taxonomy" id="391896"/>
    <lineage>
        <taxon>Bacteria</taxon>
        <taxon>Pseudomonadati</taxon>
        <taxon>Pseudomonadota</taxon>
        <taxon>Alphaproteobacteria</taxon>
        <taxon>Rickettsiales</taxon>
        <taxon>Rickettsiaceae</taxon>
        <taxon>Rickettsieae</taxon>
        <taxon>Rickettsia</taxon>
        <taxon>belli group</taxon>
    </lineage>
</organism>
<accession>A8GYD7</accession>
<keyword id="KW-0963">Cytoplasm</keyword>
<keyword id="KW-0350">Heme biosynthesis</keyword>
<keyword id="KW-0408">Iron</keyword>
<keyword id="KW-0456">Lyase</keyword>
<keyword id="KW-0479">Metal-binding</keyword>
<keyword id="KW-0627">Porphyrin biosynthesis</keyword>
<dbReference type="EC" id="4.98.1.1" evidence="1"/>
<dbReference type="EMBL" id="CP000849">
    <property type="protein sequence ID" value="ABV79887.1"/>
    <property type="molecule type" value="Genomic_DNA"/>
</dbReference>
<dbReference type="RefSeq" id="WP_011478078.1">
    <property type="nucleotide sequence ID" value="NC_009883.1"/>
</dbReference>
<dbReference type="SMR" id="A8GYD7"/>
<dbReference type="KEGG" id="rbo:A1I_07945"/>
<dbReference type="HOGENOM" id="CLU_018884_4_1_5"/>
<dbReference type="UniPathway" id="UPA00252">
    <property type="reaction ID" value="UER00325"/>
</dbReference>
<dbReference type="GO" id="GO:0005737">
    <property type="term" value="C:cytoplasm"/>
    <property type="evidence" value="ECO:0007669"/>
    <property type="project" value="UniProtKB-SubCell"/>
</dbReference>
<dbReference type="GO" id="GO:0004325">
    <property type="term" value="F:ferrochelatase activity"/>
    <property type="evidence" value="ECO:0007669"/>
    <property type="project" value="UniProtKB-UniRule"/>
</dbReference>
<dbReference type="GO" id="GO:0046872">
    <property type="term" value="F:metal ion binding"/>
    <property type="evidence" value="ECO:0007669"/>
    <property type="project" value="UniProtKB-KW"/>
</dbReference>
<dbReference type="GO" id="GO:0006783">
    <property type="term" value="P:heme biosynthetic process"/>
    <property type="evidence" value="ECO:0007669"/>
    <property type="project" value="UniProtKB-UniRule"/>
</dbReference>
<dbReference type="CDD" id="cd00419">
    <property type="entry name" value="Ferrochelatase_C"/>
    <property type="match status" value="1"/>
</dbReference>
<dbReference type="CDD" id="cd03411">
    <property type="entry name" value="Ferrochelatase_N"/>
    <property type="match status" value="1"/>
</dbReference>
<dbReference type="Gene3D" id="3.40.50.1400">
    <property type="match status" value="2"/>
</dbReference>
<dbReference type="HAMAP" id="MF_00323">
    <property type="entry name" value="Ferrochelatase"/>
    <property type="match status" value="1"/>
</dbReference>
<dbReference type="InterPro" id="IPR001015">
    <property type="entry name" value="Ferrochelatase"/>
</dbReference>
<dbReference type="InterPro" id="IPR019772">
    <property type="entry name" value="Ferrochelatase_AS"/>
</dbReference>
<dbReference type="InterPro" id="IPR033644">
    <property type="entry name" value="Ferrochelatase_C"/>
</dbReference>
<dbReference type="InterPro" id="IPR033659">
    <property type="entry name" value="Ferrochelatase_N"/>
</dbReference>
<dbReference type="NCBIfam" id="TIGR00109">
    <property type="entry name" value="hemH"/>
    <property type="match status" value="1"/>
</dbReference>
<dbReference type="PANTHER" id="PTHR11108">
    <property type="entry name" value="FERROCHELATASE"/>
    <property type="match status" value="1"/>
</dbReference>
<dbReference type="PANTHER" id="PTHR11108:SF1">
    <property type="entry name" value="FERROCHELATASE, MITOCHONDRIAL"/>
    <property type="match status" value="1"/>
</dbReference>
<dbReference type="Pfam" id="PF00762">
    <property type="entry name" value="Ferrochelatase"/>
    <property type="match status" value="1"/>
</dbReference>
<dbReference type="SUPFAM" id="SSF53800">
    <property type="entry name" value="Chelatase"/>
    <property type="match status" value="1"/>
</dbReference>
<dbReference type="PROSITE" id="PS00534">
    <property type="entry name" value="FERROCHELATASE"/>
    <property type="match status" value="1"/>
</dbReference>
<sequence length="354" mass="40447">MNINKKRIAIVLFNLGGPDSLKSVKPFLFNLFYDKAIINLPNPLRYIIAKLISTTREKKSQKIYSLIGGKSPLLEETEKQKLALAENLKQATNEDFNIFINMRYASPKIEETIKQIKEYNPTEVILLPLYPQFSTTTTGSSVKNFLSNFNINIPVKVVCCYPVEENFIKAHTALIKEKIFDKNSRVLFSAHGLPQKIIDAGDPYSFQVEETVKAVVKELNIKDLDYKVTYQSRVGPVEWLKPNTEDEIEIAGKQNKNIIIVPIAFVSEHVETLVELDIEYKLIADKYKIKYNRTPTLSTNKIFIKSLTSILLKFINKKEDDFLVASSNGERICPDKFSKCLCFTSFPPMRESSK</sequence>
<gene>
    <name evidence="1" type="primary">hemH</name>
    <name type="ordered locus">A1I_07945</name>
</gene>
<protein>
    <recommendedName>
        <fullName evidence="1">Ferrochelatase</fullName>
        <ecNumber evidence="1">4.98.1.1</ecNumber>
    </recommendedName>
    <alternativeName>
        <fullName evidence="1">Heme synthase</fullName>
    </alternativeName>
    <alternativeName>
        <fullName evidence="1">Protoheme ferro-lyase</fullName>
    </alternativeName>
</protein>
<comment type="function">
    <text evidence="1">Catalyzes the ferrous insertion into protoporphyrin IX.</text>
</comment>
<comment type="catalytic activity">
    <reaction evidence="1">
        <text>heme b + 2 H(+) = protoporphyrin IX + Fe(2+)</text>
        <dbReference type="Rhea" id="RHEA:22584"/>
        <dbReference type="ChEBI" id="CHEBI:15378"/>
        <dbReference type="ChEBI" id="CHEBI:29033"/>
        <dbReference type="ChEBI" id="CHEBI:57306"/>
        <dbReference type="ChEBI" id="CHEBI:60344"/>
        <dbReference type="EC" id="4.98.1.1"/>
    </reaction>
</comment>
<comment type="pathway">
    <text evidence="1">Porphyrin-containing compound metabolism; protoheme biosynthesis; protoheme from protoporphyrin-IX: step 1/1.</text>
</comment>
<comment type="subcellular location">
    <subcellularLocation>
        <location evidence="1">Cytoplasm</location>
    </subcellularLocation>
</comment>
<comment type="similarity">
    <text evidence="1">Belongs to the ferrochelatase family.</text>
</comment>
<proteinExistence type="inferred from homology"/>
<reference key="1">
    <citation type="submission" date="2007-09" db="EMBL/GenBank/DDBJ databases">
        <title>Complete genome sequencing of Rickettsia bellii.</title>
        <authorList>
            <person name="Madan A."/>
            <person name="Lee H."/>
            <person name="Madan A."/>
            <person name="Yoon J.-G."/>
            <person name="Ryu G.-Y."/>
            <person name="Dasch G."/>
            <person name="Ereemeva M."/>
        </authorList>
    </citation>
    <scope>NUCLEOTIDE SEQUENCE [LARGE SCALE GENOMIC DNA]</scope>
    <source>
        <strain>OSU 85-389</strain>
    </source>
</reference>
<feature type="chain" id="PRO_1000019363" description="Ferrochelatase">
    <location>
        <begin position="1"/>
        <end position="354"/>
    </location>
</feature>
<feature type="binding site" evidence="1">
    <location>
        <position position="191"/>
    </location>
    <ligand>
        <name>Fe cation</name>
        <dbReference type="ChEBI" id="CHEBI:24875"/>
    </ligand>
</feature>
<feature type="binding site" evidence="1">
    <location>
        <position position="271"/>
    </location>
    <ligand>
        <name>Fe cation</name>
        <dbReference type="ChEBI" id="CHEBI:24875"/>
    </ligand>
</feature>